<keyword id="KW-0012">Acyltransferase</keyword>
<keyword id="KW-0133">Cell shape</keyword>
<keyword id="KW-0961">Cell wall biogenesis/degradation</keyword>
<keyword id="KW-0963">Cytoplasm</keyword>
<keyword id="KW-0460">Magnesium</keyword>
<keyword id="KW-0479">Metal-binding</keyword>
<keyword id="KW-0511">Multifunctional enzyme</keyword>
<keyword id="KW-0548">Nucleotidyltransferase</keyword>
<keyword id="KW-0573">Peptidoglycan synthesis</keyword>
<keyword id="KW-0677">Repeat</keyword>
<keyword id="KW-0808">Transferase</keyword>
<protein>
    <recommendedName>
        <fullName evidence="1">Bifunctional protein GlmU</fullName>
    </recommendedName>
    <domain>
        <recommendedName>
            <fullName evidence="1">UDP-N-acetylglucosamine pyrophosphorylase</fullName>
            <ecNumber evidence="1">2.7.7.23</ecNumber>
        </recommendedName>
        <alternativeName>
            <fullName evidence="1">N-acetylglucosamine-1-phosphate uridyltransferase</fullName>
        </alternativeName>
    </domain>
    <domain>
        <recommendedName>
            <fullName evidence="1">Glucosamine-1-phosphate N-acetyltransferase</fullName>
            <ecNumber evidence="1">2.3.1.157</ecNumber>
        </recommendedName>
    </domain>
</protein>
<evidence type="ECO:0000255" key="1">
    <source>
        <dbReference type="HAMAP-Rule" id="MF_01631"/>
    </source>
</evidence>
<name>GLMU_XYLFM</name>
<gene>
    <name evidence="1" type="primary">glmU</name>
    <name type="ordered locus">Xfasm12_0482</name>
</gene>
<reference key="1">
    <citation type="journal article" date="2010" name="J. Bacteriol.">
        <title>Whole genome sequences of two Xylella fastidiosa strains (M12 and M23) causing almond leaf scorch disease in California.</title>
        <authorList>
            <person name="Chen J."/>
            <person name="Xie G."/>
            <person name="Han S."/>
            <person name="Chertkov O."/>
            <person name="Sims D."/>
            <person name="Civerolo E.L."/>
        </authorList>
    </citation>
    <scope>NUCLEOTIDE SEQUENCE [LARGE SCALE GENOMIC DNA]</scope>
    <source>
        <strain>M12</strain>
    </source>
</reference>
<dbReference type="EC" id="2.7.7.23" evidence="1"/>
<dbReference type="EC" id="2.3.1.157" evidence="1"/>
<dbReference type="EMBL" id="CP000941">
    <property type="protein sequence ID" value="ACA11491.1"/>
    <property type="molecule type" value="Genomic_DNA"/>
</dbReference>
<dbReference type="SMR" id="B0U595"/>
<dbReference type="KEGG" id="xfm:Xfasm12_0482"/>
<dbReference type="HOGENOM" id="CLU_029499_15_2_6"/>
<dbReference type="UniPathway" id="UPA00113">
    <property type="reaction ID" value="UER00532"/>
</dbReference>
<dbReference type="UniPathway" id="UPA00113">
    <property type="reaction ID" value="UER00533"/>
</dbReference>
<dbReference type="UniPathway" id="UPA00973"/>
<dbReference type="GO" id="GO:0005737">
    <property type="term" value="C:cytoplasm"/>
    <property type="evidence" value="ECO:0007669"/>
    <property type="project" value="UniProtKB-SubCell"/>
</dbReference>
<dbReference type="GO" id="GO:0016020">
    <property type="term" value="C:membrane"/>
    <property type="evidence" value="ECO:0007669"/>
    <property type="project" value="GOC"/>
</dbReference>
<dbReference type="GO" id="GO:0019134">
    <property type="term" value="F:glucosamine-1-phosphate N-acetyltransferase activity"/>
    <property type="evidence" value="ECO:0007669"/>
    <property type="project" value="UniProtKB-UniRule"/>
</dbReference>
<dbReference type="GO" id="GO:0000287">
    <property type="term" value="F:magnesium ion binding"/>
    <property type="evidence" value="ECO:0007669"/>
    <property type="project" value="UniProtKB-UniRule"/>
</dbReference>
<dbReference type="GO" id="GO:0003977">
    <property type="term" value="F:UDP-N-acetylglucosamine diphosphorylase activity"/>
    <property type="evidence" value="ECO:0007669"/>
    <property type="project" value="UniProtKB-UniRule"/>
</dbReference>
<dbReference type="GO" id="GO:0000902">
    <property type="term" value="P:cell morphogenesis"/>
    <property type="evidence" value="ECO:0007669"/>
    <property type="project" value="UniProtKB-UniRule"/>
</dbReference>
<dbReference type="GO" id="GO:0071555">
    <property type="term" value="P:cell wall organization"/>
    <property type="evidence" value="ECO:0007669"/>
    <property type="project" value="UniProtKB-KW"/>
</dbReference>
<dbReference type="GO" id="GO:0009245">
    <property type="term" value="P:lipid A biosynthetic process"/>
    <property type="evidence" value="ECO:0007669"/>
    <property type="project" value="UniProtKB-UniRule"/>
</dbReference>
<dbReference type="GO" id="GO:0009252">
    <property type="term" value="P:peptidoglycan biosynthetic process"/>
    <property type="evidence" value="ECO:0007669"/>
    <property type="project" value="UniProtKB-UniRule"/>
</dbReference>
<dbReference type="GO" id="GO:0008360">
    <property type="term" value="P:regulation of cell shape"/>
    <property type="evidence" value="ECO:0007669"/>
    <property type="project" value="UniProtKB-KW"/>
</dbReference>
<dbReference type="GO" id="GO:0006048">
    <property type="term" value="P:UDP-N-acetylglucosamine biosynthetic process"/>
    <property type="evidence" value="ECO:0007669"/>
    <property type="project" value="UniProtKB-UniPathway"/>
</dbReference>
<dbReference type="CDD" id="cd02540">
    <property type="entry name" value="GT2_GlmU_N_bac"/>
    <property type="match status" value="1"/>
</dbReference>
<dbReference type="CDD" id="cd03353">
    <property type="entry name" value="LbH_GlmU_C"/>
    <property type="match status" value="1"/>
</dbReference>
<dbReference type="Gene3D" id="2.160.10.10">
    <property type="entry name" value="Hexapeptide repeat proteins"/>
    <property type="match status" value="1"/>
</dbReference>
<dbReference type="Gene3D" id="3.90.550.10">
    <property type="entry name" value="Spore Coat Polysaccharide Biosynthesis Protein SpsA, Chain A"/>
    <property type="match status" value="1"/>
</dbReference>
<dbReference type="HAMAP" id="MF_01631">
    <property type="entry name" value="GlmU"/>
    <property type="match status" value="1"/>
</dbReference>
<dbReference type="InterPro" id="IPR005882">
    <property type="entry name" value="Bifunctional_GlmU"/>
</dbReference>
<dbReference type="InterPro" id="IPR050065">
    <property type="entry name" value="GlmU-like"/>
</dbReference>
<dbReference type="InterPro" id="IPR038009">
    <property type="entry name" value="GlmU_C_LbH"/>
</dbReference>
<dbReference type="InterPro" id="IPR001451">
    <property type="entry name" value="Hexapep"/>
</dbReference>
<dbReference type="InterPro" id="IPR025877">
    <property type="entry name" value="MobA-like_NTP_Trfase"/>
</dbReference>
<dbReference type="InterPro" id="IPR029044">
    <property type="entry name" value="Nucleotide-diphossugar_trans"/>
</dbReference>
<dbReference type="InterPro" id="IPR011004">
    <property type="entry name" value="Trimer_LpxA-like_sf"/>
</dbReference>
<dbReference type="NCBIfam" id="TIGR01173">
    <property type="entry name" value="glmU"/>
    <property type="match status" value="1"/>
</dbReference>
<dbReference type="PANTHER" id="PTHR43584:SF3">
    <property type="entry name" value="BIFUNCTIONAL PROTEIN GLMU"/>
    <property type="match status" value="1"/>
</dbReference>
<dbReference type="PANTHER" id="PTHR43584">
    <property type="entry name" value="NUCLEOTIDYL TRANSFERASE"/>
    <property type="match status" value="1"/>
</dbReference>
<dbReference type="Pfam" id="PF00132">
    <property type="entry name" value="Hexapep"/>
    <property type="match status" value="2"/>
</dbReference>
<dbReference type="Pfam" id="PF12804">
    <property type="entry name" value="NTP_transf_3"/>
    <property type="match status" value="1"/>
</dbReference>
<dbReference type="SUPFAM" id="SSF53448">
    <property type="entry name" value="Nucleotide-diphospho-sugar transferases"/>
    <property type="match status" value="1"/>
</dbReference>
<dbReference type="SUPFAM" id="SSF51161">
    <property type="entry name" value="Trimeric LpxA-like enzymes"/>
    <property type="match status" value="1"/>
</dbReference>
<proteinExistence type="inferred from homology"/>
<organism>
    <name type="scientific">Xylella fastidiosa (strain M12)</name>
    <dbReference type="NCBI Taxonomy" id="405440"/>
    <lineage>
        <taxon>Bacteria</taxon>
        <taxon>Pseudomonadati</taxon>
        <taxon>Pseudomonadota</taxon>
        <taxon>Gammaproteobacteria</taxon>
        <taxon>Lysobacterales</taxon>
        <taxon>Lysobacteraceae</taxon>
        <taxon>Xylella</taxon>
    </lineage>
</organism>
<accession>B0U595</accession>
<feature type="chain" id="PRO_1000186514" description="Bifunctional protein GlmU">
    <location>
        <begin position="1"/>
        <end position="457"/>
    </location>
</feature>
<feature type="region of interest" description="Pyrophosphorylase" evidence="1">
    <location>
        <begin position="1"/>
        <end position="230"/>
    </location>
</feature>
<feature type="region of interest" description="Linker" evidence="1">
    <location>
        <begin position="231"/>
        <end position="251"/>
    </location>
</feature>
<feature type="region of interest" description="N-acetyltransferase" evidence="1">
    <location>
        <begin position="252"/>
        <end position="457"/>
    </location>
</feature>
<feature type="active site" description="Proton acceptor" evidence="1">
    <location>
        <position position="364"/>
    </location>
</feature>
<feature type="binding site" evidence="1">
    <location>
        <begin position="12"/>
        <end position="15"/>
    </location>
    <ligand>
        <name>UDP-N-acetyl-alpha-D-glucosamine</name>
        <dbReference type="ChEBI" id="CHEBI:57705"/>
    </ligand>
</feature>
<feature type="binding site" evidence="1">
    <location>
        <position position="26"/>
    </location>
    <ligand>
        <name>UDP-N-acetyl-alpha-D-glucosamine</name>
        <dbReference type="ChEBI" id="CHEBI:57705"/>
    </ligand>
</feature>
<feature type="binding site" evidence="1">
    <location>
        <position position="78"/>
    </location>
    <ligand>
        <name>UDP-N-acetyl-alpha-D-glucosamine</name>
        <dbReference type="ChEBI" id="CHEBI:57705"/>
    </ligand>
</feature>
<feature type="binding site" evidence="1">
    <location>
        <begin position="83"/>
        <end position="84"/>
    </location>
    <ligand>
        <name>UDP-N-acetyl-alpha-D-glucosamine</name>
        <dbReference type="ChEBI" id="CHEBI:57705"/>
    </ligand>
</feature>
<feature type="binding site" evidence="1">
    <location>
        <begin position="105"/>
        <end position="107"/>
    </location>
    <ligand>
        <name>UDP-N-acetyl-alpha-D-glucosamine</name>
        <dbReference type="ChEBI" id="CHEBI:57705"/>
    </ligand>
</feature>
<feature type="binding site" evidence="1">
    <location>
        <position position="107"/>
    </location>
    <ligand>
        <name>Mg(2+)</name>
        <dbReference type="ChEBI" id="CHEBI:18420"/>
    </ligand>
</feature>
<feature type="binding site" evidence="1">
    <location>
        <position position="140"/>
    </location>
    <ligand>
        <name>UDP-N-acetyl-alpha-D-glucosamine</name>
        <dbReference type="ChEBI" id="CHEBI:57705"/>
    </ligand>
</feature>
<feature type="binding site" evidence="1">
    <location>
        <position position="155"/>
    </location>
    <ligand>
        <name>UDP-N-acetyl-alpha-D-glucosamine</name>
        <dbReference type="ChEBI" id="CHEBI:57705"/>
    </ligand>
</feature>
<feature type="binding site" evidence="1">
    <location>
        <position position="170"/>
    </location>
    <ligand>
        <name>UDP-N-acetyl-alpha-D-glucosamine</name>
        <dbReference type="ChEBI" id="CHEBI:57705"/>
    </ligand>
</feature>
<feature type="binding site" evidence="1">
    <location>
        <position position="228"/>
    </location>
    <ligand>
        <name>Mg(2+)</name>
        <dbReference type="ChEBI" id="CHEBI:18420"/>
    </ligand>
</feature>
<feature type="binding site" evidence="1">
    <location>
        <position position="228"/>
    </location>
    <ligand>
        <name>UDP-N-acetyl-alpha-D-glucosamine</name>
        <dbReference type="ChEBI" id="CHEBI:57705"/>
    </ligand>
</feature>
<feature type="binding site" evidence="1">
    <location>
        <position position="334"/>
    </location>
    <ligand>
        <name>UDP-N-acetyl-alpha-D-glucosamine</name>
        <dbReference type="ChEBI" id="CHEBI:57705"/>
    </ligand>
</feature>
<feature type="binding site" evidence="1">
    <location>
        <position position="352"/>
    </location>
    <ligand>
        <name>UDP-N-acetyl-alpha-D-glucosamine</name>
        <dbReference type="ChEBI" id="CHEBI:57705"/>
    </ligand>
</feature>
<feature type="binding site" evidence="1">
    <location>
        <position position="367"/>
    </location>
    <ligand>
        <name>UDP-N-acetyl-alpha-D-glucosamine</name>
        <dbReference type="ChEBI" id="CHEBI:57705"/>
    </ligand>
</feature>
<feature type="binding site" evidence="1">
    <location>
        <position position="378"/>
    </location>
    <ligand>
        <name>UDP-N-acetyl-alpha-D-glucosamine</name>
        <dbReference type="ChEBI" id="CHEBI:57705"/>
    </ligand>
</feature>
<feature type="binding site" evidence="1">
    <location>
        <position position="381"/>
    </location>
    <ligand>
        <name>acetyl-CoA</name>
        <dbReference type="ChEBI" id="CHEBI:57288"/>
    </ligand>
</feature>
<feature type="binding site" evidence="1">
    <location>
        <begin position="387"/>
        <end position="388"/>
    </location>
    <ligand>
        <name>acetyl-CoA</name>
        <dbReference type="ChEBI" id="CHEBI:57288"/>
    </ligand>
</feature>
<feature type="binding site" evidence="1">
    <location>
        <position position="406"/>
    </location>
    <ligand>
        <name>acetyl-CoA</name>
        <dbReference type="ChEBI" id="CHEBI:57288"/>
    </ligand>
</feature>
<feature type="binding site" evidence="1">
    <location>
        <position position="424"/>
    </location>
    <ligand>
        <name>acetyl-CoA</name>
        <dbReference type="ChEBI" id="CHEBI:57288"/>
    </ligand>
</feature>
<feature type="binding site" evidence="1">
    <location>
        <position position="441"/>
    </location>
    <ligand>
        <name>acetyl-CoA</name>
        <dbReference type="ChEBI" id="CHEBI:57288"/>
    </ligand>
</feature>
<comment type="function">
    <text evidence="1">Catalyzes the last two sequential reactions in the de novo biosynthetic pathway for UDP-N-acetylglucosamine (UDP-GlcNAc). The C-terminal domain catalyzes the transfer of acetyl group from acetyl coenzyme A to glucosamine-1-phosphate (GlcN-1-P) to produce N-acetylglucosamine-1-phosphate (GlcNAc-1-P), which is converted into UDP-GlcNAc by the transfer of uridine 5-monophosphate (from uridine 5-triphosphate), a reaction catalyzed by the N-terminal domain.</text>
</comment>
<comment type="catalytic activity">
    <reaction evidence="1">
        <text>alpha-D-glucosamine 1-phosphate + acetyl-CoA = N-acetyl-alpha-D-glucosamine 1-phosphate + CoA + H(+)</text>
        <dbReference type="Rhea" id="RHEA:13725"/>
        <dbReference type="ChEBI" id="CHEBI:15378"/>
        <dbReference type="ChEBI" id="CHEBI:57287"/>
        <dbReference type="ChEBI" id="CHEBI:57288"/>
        <dbReference type="ChEBI" id="CHEBI:57776"/>
        <dbReference type="ChEBI" id="CHEBI:58516"/>
        <dbReference type="EC" id="2.3.1.157"/>
    </reaction>
</comment>
<comment type="catalytic activity">
    <reaction evidence="1">
        <text>N-acetyl-alpha-D-glucosamine 1-phosphate + UTP + H(+) = UDP-N-acetyl-alpha-D-glucosamine + diphosphate</text>
        <dbReference type="Rhea" id="RHEA:13509"/>
        <dbReference type="ChEBI" id="CHEBI:15378"/>
        <dbReference type="ChEBI" id="CHEBI:33019"/>
        <dbReference type="ChEBI" id="CHEBI:46398"/>
        <dbReference type="ChEBI" id="CHEBI:57705"/>
        <dbReference type="ChEBI" id="CHEBI:57776"/>
        <dbReference type="EC" id="2.7.7.23"/>
    </reaction>
</comment>
<comment type="cofactor">
    <cofactor evidence="1">
        <name>Mg(2+)</name>
        <dbReference type="ChEBI" id="CHEBI:18420"/>
    </cofactor>
    <text evidence="1">Binds 1 Mg(2+) ion per subunit.</text>
</comment>
<comment type="pathway">
    <text evidence="1">Nucleotide-sugar biosynthesis; UDP-N-acetyl-alpha-D-glucosamine biosynthesis; N-acetyl-alpha-D-glucosamine 1-phosphate from alpha-D-glucosamine 6-phosphate (route II): step 2/2.</text>
</comment>
<comment type="pathway">
    <text evidence="1">Nucleotide-sugar biosynthesis; UDP-N-acetyl-alpha-D-glucosamine biosynthesis; UDP-N-acetyl-alpha-D-glucosamine from N-acetyl-alpha-D-glucosamine 1-phosphate: step 1/1.</text>
</comment>
<comment type="pathway">
    <text evidence="1">Bacterial outer membrane biogenesis; LPS lipid A biosynthesis.</text>
</comment>
<comment type="subunit">
    <text evidence="1">Homotrimer.</text>
</comment>
<comment type="subcellular location">
    <subcellularLocation>
        <location evidence="1">Cytoplasm</location>
    </subcellularLocation>
</comment>
<comment type="similarity">
    <text evidence="1">In the N-terminal section; belongs to the N-acetylglucosamine-1-phosphate uridyltransferase family.</text>
</comment>
<comment type="similarity">
    <text evidence="1">In the C-terminal section; belongs to the transferase hexapeptide repeat family.</text>
</comment>
<sequence length="457" mass="48805">MPLSLPLHIVILAAGEGKRMKSALPKVLHPIAGKPMLAHVITTARALTPDVIHVVYGHAGNQVRTAFADQTDLHWVEQTQQLGTGHAVKQTMSAIPNAANVLVLYGDVPLIRAETLQRLPRASTPIAVLVTDLANPAGYGHIVRNSEGKVAAIIEDKDADEEQRRIHTVNTGILCAESTALRRWLSKLSNTNMQGEYYLTDIFASATADLTPANMIMVTDPREVEGVNDLWQLTQLERTWQIRAARALCLQGARVADPARLDQRGTIRIGQNVHIDIDVVLEGEIELGDNVVIGPFVRLKNVKLGPGTKVHAHCDLEGVTTTGSALIGPFARLRPGTMLADGVHIGNFVETKNTSIGADSKANHLTYLGDAQIGTKVNIGAGTITCNYDGVNKSITLIGDGAFIGSHSALIAPVSVGAGATLGAGTVLTHDAPAHQLTVARARQTTLDGWQRPKKKT</sequence>